<reference evidence="4" key="1">
    <citation type="journal article" date="2006" name="Rapid Commun. Mass Spectrom.">
        <title>Host-defence skin peptides of the Australian streambank froglet Crinia riparia: isolation and sequence determination by positive and negative ion electrospray mass spectrometry.</title>
        <authorList>
            <person name="Maselli V.M."/>
            <person name="Bilusich D."/>
            <person name="Bowie J.H."/>
            <person name="Tyler M.J."/>
        </authorList>
    </citation>
    <scope>PROTEIN SEQUENCE</scope>
    <scope>SUBCELLULAR LOCATION</scope>
    <scope>TISSUE SPECIFICITY</scope>
    <scope>DISULFIDE BOND</scope>
    <source>
        <tissue evidence="1">Skin secretion</tissue>
    </source>
</reference>
<reference evidence="4" key="2">
    <citation type="journal article" date="2008" name="Regul. Pept.">
        <title>Disulfide-containing peptides from the glandular skin secretions of froglets of the genus Crinia: structure, activity and evolutionary trends.</title>
        <authorList>
            <person name="Jackway R.J."/>
            <person name="Pukala T.L."/>
            <person name="Maselli V.M."/>
            <person name="Musgrave I.F."/>
            <person name="Bowie J.H."/>
            <person name="Liu Y."/>
            <person name="Surinya-Johnson K.H."/>
            <person name="Donnellan S.C."/>
            <person name="Doyle J.R."/>
            <person name="Llewellyn L.E."/>
            <person name="Tyler M.J."/>
        </authorList>
    </citation>
    <scope>FUNCTION</scope>
    <scope>DISCUSSION OF SEQUENCE</scope>
</reference>
<keyword id="KW-0878">Amphibian defense peptide</keyword>
<keyword id="KW-0903">Direct protein sequencing</keyword>
<keyword id="KW-1015">Disulfide bond</keyword>
<keyword id="KW-0964">Secreted</keyword>
<name>RIP12_CRIRI</name>
<evidence type="ECO:0000269" key="1">
    <source>
    </source>
</evidence>
<evidence type="ECO:0000269" key="2">
    <source>
    </source>
</evidence>
<evidence type="ECO:0000303" key="3">
    <source>
    </source>
</evidence>
<evidence type="ECO:0000305" key="4"/>
<protein>
    <recommendedName>
        <fullName evidence="3">Riparin-1.2</fullName>
    </recommendedName>
</protein>
<accession>P86125</accession>
<organism>
    <name type="scientific">Crinia riparia</name>
    <name type="common">Streambank froglet</name>
    <name type="synonym">Flinders Ranges froglet</name>
    <dbReference type="NCBI Taxonomy" id="446489"/>
    <lineage>
        <taxon>Eukaryota</taxon>
        <taxon>Metazoa</taxon>
        <taxon>Chordata</taxon>
        <taxon>Craniata</taxon>
        <taxon>Vertebrata</taxon>
        <taxon>Euteleostomi</taxon>
        <taxon>Amphibia</taxon>
        <taxon>Batrachia</taxon>
        <taxon>Anura</taxon>
        <taxon>Neobatrachia</taxon>
        <taxon>Myobatrachoidea</taxon>
        <taxon>Myobatrachidae</taxon>
        <taxon>Myobatrachinae</taxon>
        <taxon>Crinia</taxon>
    </lineage>
</organism>
<sequence>FLPPCAYKGTC</sequence>
<dbReference type="GO" id="GO:0005576">
    <property type="term" value="C:extracellular region"/>
    <property type="evidence" value="ECO:0000314"/>
    <property type="project" value="UniProtKB"/>
</dbReference>
<dbReference type="GO" id="GO:0006952">
    <property type="term" value="P:defense response"/>
    <property type="evidence" value="ECO:0007669"/>
    <property type="project" value="UniProtKB-KW"/>
</dbReference>
<dbReference type="GO" id="GO:0070665">
    <property type="term" value="P:positive regulation of leukocyte proliferation"/>
    <property type="evidence" value="ECO:0000314"/>
    <property type="project" value="UniProtKB"/>
</dbReference>
<comment type="function">
    <text evidence="2">Induces mouse splenocyte proliferation through binding to CCK-BR.</text>
</comment>
<comment type="subcellular location">
    <subcellularLocation>
        <location evidence="1">Secreted</location>
    </subcellularLocation>
</comment>
<comment type="tissue specificity">
    <text evidence="1">Expressed by the skin glands.</text>
</comment>
<feature type="peptide" id="PRO_0000371726" description="Riparin-1.2" evidence="1">
    <location>
        <begin position="1"/>
        <end position="11"/>
    </location>
</feature>
<feature type="disulfide bond" evidence="1">
    <location>
        <begin position="5"/>
        <end position="11"/>
    </location>
</feature>
<proteinExistence type="evidence at protein level"/>